<keyword id="KW-1185">Reference proteome</keyword>
<keyword id="KW-0687">Ribonucleoprotein</keyword>
<keyword id="KW-0689">Ribosomal protein</keyword>
<keyword id="KW-0694">RNA-binding</keyword>
<keyword id="KW-0699">rRNA-binding</keyword>
<evidence type="ECO:0000255" key="1">
    <source>
        <dbReference type="HAMAP-Rule" id="MF_01320"/>
    </source>
</evidence>
<evidence type="ECO:0000256" key="2">
    <source>
        <dbReference type="SAM" id="MobiDB-lite"/>
    </source>
</evidence>
<evidence type="ECO:0000305" key="3"/>
<comment type="function">
    <text evidence="1">One of the primary rRNA binding proteins. Required for association of the 30S and 50S subunits to form the 70S ribosome, for tRNA binding and peptide bond formation. It has been suggested to have peptidyltransferase activity; this is somewhat controversial. Makes several contacts with the 16S rRNA in the 70S ribosome.</text>
</comment>
<comment type="subunit">
    <text evidence="1">Part of the 50S ribosomal subunit. Forms a bridge to the 30S subunit in the 70S ribosome.</text>
</comment>
<comment type="similarity">
    <text evidence="1">Belongs to the universal ribosomal protein uL2 family.</text>
</comment>
<reference key="1">
    <citation type="journal article" date="2007" name="Nat. Biotechnol.">
        <title>Complete genome sequence of the erythromycin-producing bacterium Saccharopolyspora erythraea NRRL23338.</title>
        <authorList>
            <person name="Oliynyk M."/>
            <person name="Samborskyy M."/>
            <person name="Lester J.B."/>
            <person name="Mironenko T."/>
            <person name="Scott N."/>
            <person name="Dickens S."/>
            <person name="Haydock S.F."/>
            <person name="Leadlay P.F."/>
        </authorList>
    </citation>
    <scope>NUCLEOTIDE SEQUENCE [LARGE SCALE GENOMIC DNA]</scope>
    <source>
        <strain>ATCC 11635 / DSM 40517 / JCM 4748 / NBRC 13426 / NCIMB 8594 / NRRL 2338</strain>
    </source>
</reference>
<dbReference type="EMBL" id="AM420293">
    <property type="protein sequence ID" value="CAM05997.1"/>
    <property type="molecule type" value="Genomic_DNA"/>
</dbReference>
<dbReference type="RefSeq" id="WP_009948630.1">
    <property type="nucleotide sequence ID" value="NC_009142.1"/>
</dbReference>
<dbReference type="SMR" id="A4FPM2"/>
<dbReference type="STRING" id="405948.SACE_6833"/>
<dbReference type="KEGG" id="sen:SACE_6833"/>
<dbReference type="eggNOG" id="COG0090">
    <property type="taxonomic scope" value="Bacteria"/>
</dbReference>
<dbReference type="HOGENOM" id="CLU_036235_2_1_11"/>
<dbReference type="OrthoDB" id="9778722at2"/>
<dbReference type="Proteomes" id="UP000006728">
    <property type="component" value="Chromosome"/>
</dbReference>
<dbReference type="GO" id="GO:0015934">
    <property type="term" value="C:large ribosomal subunit"/>
    <property type="evidence" value="ECO:0007669"/>
    <property type="project" value="InterPro"/>
</dbReference>
<dbReference type="GO" id="GO:0019843">
    <property type="term" value="F:rRNA binding"/>
    <property type="evidence" value="ECO:0007669"/>
    <property type="project" value="UniProtKB-UniRule"/>
</dbReference>
<dbReference type="GO" id="GO:0003735">
    <property type="term" value="F:structural constituent of ribosome"/>
    <property type="evidence" value="ECO:0007669"/>
    <property type="project" value="InterPro"/>
</dbReference>
<dbReference type="GO" id="GO:0016740">
    <property type="term" value="F:transferase activity"/>
    <property type="evidence" value="ECO:0007669"/>
    <property type="project" value="InterPro"/>
</dbReference>
<dbReference type="GO" id="GO:0002181">
    <property type="term" value="P:cytoplasmic translation"/>
    <property type="evidence" value="ECO:0007669"/>
    <property type="project" value="TreeGrafter"/>
</dbReference>
<dbReference type="FunFam" id="2.30.30.30:FF:000001">
    <property type="entry name" value="50S ribosomal protein L2"/>
    <property type="match status" value="1"/>
</dbReference>
<dbReference type="FunFam" id="2.40.50.140:FF:000003">
    <property type="entry name" value="50S ribosomal protein L2"/>
    <property type="match status" value="1"/>
</dbReference>
<dbReference type="FunFam" id="4.10.950.10:FF:000001">
    <property type="entry name" value="50S ribosomal protein L2"/>
    <property type="match status" value="1"/>
</dbReference>
<dbReference type="Gene3D" id="2.30.30.30">
    <property type="match status" value="1"/>
</dbReference>
<dbReference type="Gene3D" id="2.40.50.140">
    <property type="entry name" value="Nucleic acid-binding proteins"/>
    <property type="match status" value="1"/>
</dbReference>
<dbReference type="Gene3D" id="4.10.950.10">
    <property type="entry name" value="Ribosomal protein L2, domain 3"/>
    <property type="match status" value="1"/>
</dbReference>
<dbReference type="HAMAP" id="MF_01320_B">
    <property type="entry name" value="Ribosomal_uL2_B"/>
    <property type="match status" value="1"/>
</dbReference>
<dbReference type="InterPro" id="IPR012340">
    <property type="entry name" value="NA-bd_OB-fold"/>
</dbReference>
<dbReference type="InterPro" id="IPR014722">
    <property type="entry name" value="Rib_uL2_dom2"/>
</dbReference>
<dbReference type="InterPro" id="IPR002171">
    <property type="entry name" value="Ribosomal_uL2"/>
</dbReference>
<dbReference type="InterPro" id="IPR005880">
    <property type="entry name" value="Ribosomal_uL2_bac/org-type"/>
</dbReference>
<dbReference type="InterPro" id="IPR022669">
    <property type="entry name" value="Ribosomal_uL2_C"/>
</dbReference>
<dbReference type="InterPro" id="IPR022671">
    <property type="entry name" value="Ribosomal_uL2_CS"/>
</dbReference>
<dbReference type="InterPro" id="IPR014726">
    <property type="entry name" value="Ribosomal_uL2_dom3"/>
</dbReference>
<dbReference type="InterPro" id="IPR022666">
    <property type="entry name" value="Ribosomal_uL2_RNA-bd_dom"/>
</dbReference>
<dbReference type="InterPro" id="IPR008991">
    <property type="entry name" value="Translation_prot_SH3-like_sf"/>
</dbReference>
<dbReference type="NCBIfam" id="TIGR01171">
    <property type="entry name" value="rplB_bact"/>
    <property type="match status" value="1"/>
</dbReference>
<dbReference type="PANTHER" id="PTHR13691:SF5">
    <property type="entry name" value="LARGE RIBOSOMAL SUBUNIT PROTEIN UL2M"/>
    <property type="match status" value="1"/>
</dbReference>
<dbReference type="PANTHER" id="PTHR13691">
    <property type="entry name" value="RIBOSOMAL PROTEIN L2"/>
    <property type="match status" value="1"/>
</dbReference>
<dbReference type="Pfam" id="PF00181">
    <property type="entry name" value="Ribosomal_L2"/>
    <property type="match status" value="1"/>
</dbReference>
<dbReference type="Pfam" id="PF03947">
    <property type="entry name" value="Ribosomal_L2_C"/>
    <property type="match status" value="1"/>
</dbReference>
<dbReference type="PIRSF" id="PIRSF002158">
    <property type="entry name" value="Ribosomal_L2"/>
    <property type="match status" value="1"/>
</dbReference>
<dbReference type="SMART" id="SM01383">
    <property type="entry name" value="Ribosomal_L2"/>
    <property type="match status" value="1"/>
</dbReference>
<dbReference type="SMART" id="SM01382">
    <property type="entry name" value="Ribosomal_L2_C"/>
    <property type="match status" value="1"/>
</dbReference>
<dbReference type="SUPFAM" id="SSF50249">
    <property type="entry name" value="Nucleic acid-binding proteins"/>
    <property type="match status" value="1"/>
</dbReference>
<dbReference type="SUPFAM" id="SSF50104">
    <property type="entry name" value="Translation proteins SH3-like domain"/>
    <property type="match status" value="1"/>
</dbReference>
<dbReference type="PROSITE" id="PS00467">
    <property type="entry name" value="RIBOSOMAL_L2"/>
    <property type="match status" value="1"/>
</dbReference>
<feature type="chain" id="PRO_0000310007" description="Large ribosomal subunit protein uL2">
    <location>
        <begin position="1"/>
        <end position="277"/>
    </location>
</feature>
<feature type="region of interest" description="Disordered" evidence="2">
    <location>
        <begin position="1"/>
        <end position="58"/>
    </location>
</feature>
<feature type="region of interest" description="Disordered" evidence="2">
    <location>
        <begin position="223"/>
        <end position="277"/>
    </location>
</feature>
<feature type="compositionally biased region" description="Basic and acidic residues" evidence="2">
    <location>
        <begin position="23"/>
        <end position="33"/>
    </location>
</feature>
<feature type="compositionally biased region" description="Basic residues" evidence="2">
    <location>
        <begin position="37"/>
        <end position="58"/>
    </location>
</feature>
<feature type="compositionally biased region" description="Basic and acidic residues" evidence="2">
    <location>
        <begin position="251"/>
        <end position="267"/>
    </location>
</feature>
<feature type="compositionally biased region" description="Basic residues" evidence="2">
    <location>
        <begin position="268"/>
        <end position="277"/>
    </location>
</feature>
<accession>A4FPM2</accession>
<gene>
    <name evidence="1" type="primary">rplB</name>
    <name type="ordered locus">SACE_6833</name>
</gene>
<sequence length="277" mass="30441">MGIRKHKPTTPGRRGSSVSDFAEITRSEPEKSLLRPLHGRGGRNAHGKITTRHKGGGHKRAYRLIDFRRNDKDGVPAKVAHIEYDPNRSARIALLHYADGEKRYIIAPNNVRQGDRIESGARADIKPGNNLPLRNIPTGTVVHAIELRPGGGAKIARSAGARVQLVAKDGPYAQLRMPSGEIRNVDARCRATVGEVGNSEHANINWGKAGRMRWKGKRPTVRGVVMNPVDHPHGGGEGKTSGGRHPVNPKGKPEGRTRRNKPSDKLIVRRRRTGKKR</sequence>
<proteinExistence type="inferred from homology"/>
<name>RL2_SACEN</name>
<protein>
    <recommendedName>
        <fullName evidence="1">Large ribosomal subunit protein uL2</fullName>
    </recommendedName>
    <alternativeName>
        <fullName evidence="3">50S ribosomal protein L2</fullName>
    </alternativeName>
</protein>
<organism>
    <name type="scientific">Saccharopolyspora erythraea (strain ATCC 11635 / DSM 40517 / JCM 4748 / NBRC 13426 / NCIMB 8594 / NRRL 2338)</name>
    <dbReference type="NCBI Taxonomy" id="405948"/>
    <lineage>
        <taxon>Bacteria</taxon>
        <taxon>Bacillati</taxon>
        <taxon>Actinomycetota</taxon>
        <taxon>Actinomycetes</taxon>
        <taxon>Pseudonocardiales</taxon>
        <taxon>Pseudonocardiaceae</taxon>
        <taxon>Saccharopolyspora</taxon>
    </lineage>
</organism>